<gene>
    <name evidence="1" type="primary">rnpA</name>
    <name type="ordered locus">Teth514_2413</name>
</gene>
<name>RNPA_THEPX</name>
<protein>
    <recommendedName>
        <fullName evidence="1">Ribonuclease P protein component</fullName>
        <shortName evidence="1">RNase P protein</shortName>
        <shortName evidence="1">RNaseP protein</shortName>
        <ecNumber evidence="1">3.1.26.5</ecNumber>
    </recommendedName>
    <alternativeName>
        <fullName evidence="1">Protein C5</fullName>
    </alternativeName>
</protein>
<keyword id="KW-0255">Endonuclease</keyword>
<keyword id="KW-0378">Hydrolase</keyword>
<keyword id="KW-0540">Nuclease</keyword>
<keyword id="KW-0694">RNA-binding</keyword>
<keyword id="KW-0819">tRNA processing</keyword>
<proteinExistence type="inferred from homology"/>
<comment type="function">
    <text evidence="1">RNaseP catalyzes the removal of the 5'-leader sequence from pre-tRNA to produce the mature 5'-terminus. It can also cleave other RNA substrates such as 4.5S RNA. The protein component plays an auxiliary but essential role in vivo by binding to the 5'-leader sequence and broadening the substrate specificity of the ribozyme.</text>
</comment>
<comment type="catalytic activity">
    <reaction evidence="1">
        <text>Endonucleolytic cleavage of RNA, removing 5'-extranucleotides from tRNA precursor.</text>
        <dbReference type="EC" id="3.1.26.5"/>
    </reaction>
</comment>
<comment type="subunit">
    <text evidence="1">Consists of a catalytic RNA component (M1 or rnpB) and a protein subunit.</text>
</comment>
<comment type="similarity">
    <text evidence="1">Belongs to the RnpA family.</text>
</comment>
<reference key="1">
    <citation type="submission" date="2008-01" db="EMBL/GenBank/DDBJ databases">
        <title>Complete sequence of Thermoanaerobacter sp. X514.</title>
        <authorList>
            <consortium name="US DOE Joint Genome Institute"/>
            <person name="Copeland A."/>
            <person name="Lucas S."/>
            <person name="Lapidus A."/>
            <person name="Barry K."/>
            <person name="Glavina del Rio T."/>
            <person name="Dalin E."/>
            <person name="Tice H."/>
            <person name="Pitluck S."/>
            <person name="Bruce D."/>
            <person name="Goodwin L."/>
            <person name="Saunders E."/>
            <person name="Brettin T."/>
            <person name="Detter J.C."/>
            <person name="Han C."/>
            <person name="Schmutz J."/>
            <person name="Larimer F."/>
            <person name="Land M."/>
            <person name="Hauser L."/>
            <person name="Kyrpides N."/>
            <person name="Kim E."/>
            <person name="Hemme C."/>
            <person name="Fields M.W."/>
            <person name="He Z."/>
            <person name="Zhou J."/>
            <person name="Richardson P."/>
        </authorList>
    </citation>
    <scope>NUCLEOTIDE SEQUENCE [LARGE SCALE GENOMIC DNA]</scope>
    <source>
        <strain>X514</strain>
    </source>
</reference>
<evidence type="ECO:0000255" key="1">
    <source>
        <dbReference type="HAMAP-Rule" id="MF_00227"/>
    </source>
</evidence>
<organism>
    <name type="scientific">Thermoanaerobacter sp. (strain X514)</name>
    <dbReference type="NCBI Taxonomy" id="399726"/>
    <lineage>
        <taxon>Bacteria</taxon>
        <taxon>Bacillati</taxon>
        <taxon>Bacillota</taxon>
        <taxon>Clostridia</taxon>
        <taxon>Thermoanaerobacterales</taxon>
        <taxon>Thermoanaerobacteraceae</taxon>
        <taxon>Thermoanaerobacter</taxon>
    </lineage>
</organism>
<dbReference type="EC" id="3.1.26.5" evidence="1"/>
<dbReference type="EMBL" id="CP000923">
    <property type="protein sequence ID" value="ABY93672.1"/>
    <property type="molecule type" value="Genomic_DNA"/>
</dbReference>
<dbReference type="RefSeq" id="WP_009052053.1">
    <property type="nucleotide sequence ID" value="NC_010320.1"/>
</dbReference>
<dbReference type="SMR" id="B0K5N8"/>
<dbReference type="KEGG" id="tex:Teth514_2413"/>
<dbReference type="HOGENOM" id="CLU_117179_9_3_9"/>
<dbReference type="Proteomes" id="UP000002155">
    <property type="component" value="Chromosome"/>
</dbReference>
<dbReference type="GO" id="GO:0030677">
    <property type="term" value="C:ribonuclease P complex"/>
    <property type="evidence" value="ECO:0007669"/>
    <property type="project" value="TreeGrafter"/>
</dbReference>
<dbReference type="GO" id="GO:0042781">
    <property type="term" value="F:3'-tRNA processing endoribonuclease activity"/>
    <property type="evidence" value="ECO:0007669"/>
    <property type="project" value="TreeGrafter"/>
</dbReference>
<dbReference type="GO" id="GO:0004526">
    <property type="term" value="F:ribonuclease P activity"/>
    <property type="evidence" value="ECO:0007669"/>
    <property type="project" value="UniProtKB-UniRule"/>
</dbReference>
<dbReference type="GO" id="GO:0000049">
    <property type="term" value="F:tRNA binding"/>
    <property type="evidence" value="ECO:0007669"/>
    <property type="project" value="UniProtKB-UniRule"/>
</dbReference>
<dbReference type="GO" id="GO:0001682">
    <property type="term" value="P:tRNA 5'-leader removal"/>
    <property type="evidence" value="ECO:0007669"/>
    <property type="project" value="UniProtKB-UniRule"/>
</dbReference>
<dbReference type="Gene3D" id="3.30.230.10">
    <property type="match status" value="1"/>
</dbReference>
<dbReference type="HAMAP" id="MF_00227">
    <property type="entry name" value="RNase_P"/>
    <property type="match status" value="1"/>
</dbReference>
<dbReference type="InterPro" id="IPR020568">
    <property type="entry name" value="Ribosomal_Su5_D2-typ_SF"/>
</dbReference>
<dbReference type="InterPro" id="IPR014721">
    <property type="entry name" value="Ribsml_uS5_D2-typ_fold_subgr"/>
</dbReference>
<dbReference type="InterPro" id="IPR000100">
    <property type="entry name" value="RNase_P"/>
</dbReference>
<dbReference type="NCBIfam" id="TIGR00188">
    <property type="entry name" value="rnpA"/>
    <property type="match status" value="1"/>
</dbReference>
<dbReference type="PANTHER" id="PTHR33992">
    <property type="entry name" value="RIBONUCLEASE P PROTEIN COMPONENT"/>
    <property type="match status" value="1"/>
</dbReference>
<dbReference type="PANTHER" id="PTHR33992:SF1">
    <property type="entry name" value="RIBONUCLEASE P PROTEIN COMPONENT"/>
    <property type="match status" value="1"/>
</dbReference>
<dbReference type="Pfam" id="PF00825">
    <property type="entry name" value="Ribonuclease_P"/>
    <property type="match status" value="1"/>
</dbReference>
<dbReference type="SUPFAM" id="SSF54211">
    <property type="entry name" value="Ribosomal protein S5 domain 2-like"/>
    <property type="match status" value="1"/>
</dbReference>
<accession>B0K5N8</accession>
<sequence>MRRKIVKIKKSYEFKKVYSNGKSVANQFVVMYYMENNLGFNRVGYSVSKKIGKSVVRNRVRRLLHESFRLLDIEIKTGFDIIFVARGKIVEADFHTLKNSMRKLIMKTPLYAGNEK</sequence>
<feature type="chain" id="PRO_1000100404" description="Ribonuclease P protein component">
    <location>
        <begin position="1"/>
        <end position="116"/>
    </location>
</feature>